<organism>
    <name type="scientific">Escherichia coli (strain 55989 / EAEC)</name>
    <dbReference type="NCBI Taxonomy" id="585055"/>
    <lineage>
        <taxon>Bacteria</taxon>
        <taxon>Pseudomonadati</taxon>
        <taxon>Pseudomonadota</taxon>
        <taxon>Gammaproteobacteria</taxon>
        <taxon>Enterobacterales</taxon>
        <taxon>Enterobacteriaceae</taxon>
        <taxon>Escherichia</taxon>
    </lineage>
</organism>
<reference key="1">
    <citation type="journal article" date="2009" name="PLoS Genet.">
        <title>Organised genome dynamics in the Escherichia coli species results in highly diverse adaptive paths.</title>
        <authorList>
            <person name="Touchon M."/>
            <person name="Hoede C."/>
            <person name="Tenaillon O."/>
            <person name="Barbe V."/>
            <person name="Baeriswyl S."/>
            <person name="Bidet P."/>
            <person name="Bingen E."/>
            <person name="Bonacorsi S."/>
            <person name="Bouchier C."/>
            <person name="Bouvet O."/>
            <person name="Calteau A."/>
            <person name="Chiapello H."/>
            <person name="Clermont O."/>
            <person name="Cruveiller S."/>
            <person name="Danchin A."/>
            <person name="Diard M."/>
            <person name="Dossat C."/>
            <person name="Karoui M.E."/>
            <person name="Frapy E."/>
            <person name="Garry L."/>
            <person name="Ghigo J.M."/>
            <person name="Gilles A.M."/>
            <person name="Johnson J."/>
            <person name="Le Bouguenec C."/>
            <person name="Lescat M."/>
            <person name="Mangenot S."/>
            <person name="Martinez-Jehanne V."/>
            <person name="Matic I."/>
            <person name="Nassif X."/>
            <person name="Oztas S."/>
            <person name="Petit M.A."/>
            <person name="Pichon C."/>
            <person name="Rouy Z."/>
            <person name="Ruf C.S."/>
            <person name="Schneider D."/>
            <person name="Tourret J."/>
            <person name="Vacherie B."/>
            <person name="Vallenet D."/>
            <person name="Medigue C."/>
            <person name="Rocha E.P.C."/>
            <person name="Denamur E."/>
        </authorList>
    </citation>
    <scope>NUCLEOTIDE SEQUENCE [LARGE SCALE GENOMIC DNA]</scope>
    <source>
        <strain>55989 / EAEC</strain>
    </source>
</reference>
<comment type="function">
    <text evidence="1">Transferase that catalyzes the transfer of sulfur from thiosulfate to thiophilic acceptors such as cyanide or dithiols. May function in a CysM-independent thiosulfate assimilation pathway by catalyzing the conversion of thiosulfate to sulfite, which can then be used for L-cysteine biosynthesis.</text>
</comment>
<comment type="catalytic activity">
    <reaction evidence="1">
        <text>thiosulfate + hydrogen cyanide = thiocyanate + sulfite + 2 H(+)</text>
        <dbReference type="Rhea" id="RHEA:16881"/>
        <dbReference type="ChEBI" id="CHEBI:15378"/>
        <dbReference type="ChEBI" id="CHEBI:17359"/>
        <dbReference type="ChEBI" id="CHEBI:18022"/>
        <dbReference type="ChEBI" id="CHEBI:18407"/>
        <dbReference type="ChEBI" id="CHEBI:33542"/>
        <dbReference type="EC" id="2.8.1.1"/>
    </reaction>
</comment>
<comment type="catalytic activity">
    <reaction evidence="1">
        <text>thiosulfate + [thioredoxin]-dithiol = [thioredoxin]-disulfide + hydrogen sulfide + sulfite + 2 H(+)</text>
        <dbReference type="Rhea" id="RHEA:83859"/>
        <dbReference type="Rhea" id="RHEA-COMP:10698"/>
        <dbReference type="Rhea" id="RHEA-COMP:10700"/>
        <dbReference type="ChEBI" id="CHEBI:15378"/>
        <dbReference type="ChEBI" id="CHEBI:17359"/>
        <dbReference type="ChEBI" id="CHEBI:29919"/>
        <dbReference type="ChEBI" id="CHEBI:29950"/>
        <dbReference type="ChEBI" id="CHEBI:33542"/>
        <dbReference type="ChEBI" id="CHEBI:50058"/>
    </reaction>
</comment>
<comment type="subcellular location">
    <subcellularLocation>
        <location evidence="1">Cytoplasm</location>
    </subcellularLocation>
</comment>
<comment type="similarity">
    <text evidence="1">Belongs to the GlpE family.</text>
</comment>
<keyword id="KW-0963">Cytoplasm</keyword>
<keyword id="KW-1185">Reference proteome</keyword>
<keyword id="KW-0808">Transferase</keyword>
<accession>B7L4V4</accession>
<evidence type="ECO:0000255" key="1">
    <source>
        <dbReference type="HAMAP-Rule" id="MF_01009"/>
    </source>
</evidence>
<sequence>MDQFECINVADAHQKLQEKEAVLVDIRDPQSFAMGHAVQAFHLTNDTLGAFMRDNDFDTPVMVMCYHGNSSKGAAQYLLQQGYDVVYSIDGGFEAWQRQFPAEVAYGA</sequence>
<feature type="chain" id="PRO_1000148873" description="Thiosulfate sulfurtransferase GlpE">
    <location>
        <begin position="1"/>
        <end position="108"/>
    </location>
</feature>
<feature type="domain" description="Rhodanese" evidence="1">
    <location>
        <begin position="17"/>
        <end position="105"/>
    </location>
</feature>
<feature type="active site" description="Cysteine persulfide intermediate" evidence="1">
    <location>
        <position position="65"/>
    </location>
</feature>
<gene>
    <name evidence="1" type="primary">glpE</name>
    <name type="ordered locus">EC55989_3832</name>
</gene>
<dbReference type="EC" id="2.8.1.1" evidence="1"/>
<dbReference type="EMBL" id="CU928145">
    <property type="protein sequence ID" value="CAV00202.1"/>
    <property type="molecule type" value="Genomic_DNA"/>
</dbReference>
<dbReference type="RefSeq" id="WP_000371928.1">
    <property type="nucleotide sequence ID" value="NC_011748.1"/>
</dbReference>
<dbReference type="SMR" id="B7L4V4"/>
<dbReference type="GeneID" id="93778571"/>
<dbReference type="KEGG" id="eck:EC55989_3832"/>
<dbReference type="HOGENOM" id="CLU_089574_14_0_6"/>
<dbReference type="Proteomes" id="UP000000746">
    <property type="component" value="Chromosome"/>
</dbReference>
<dbReference type="GO" id="GO:0005737">
    <property type="term" value="C:cytoplasm"/>
    <property type="evidence" value="ECO:0007669"/>
    <property type="project" value="UniProtKB-SubCell"/>
</dbReference>
<dbReference type="GO" id="GO:0004792">
    <property type="term" value="F:thiosulfate-cyanide sulfurtransferase activity"/>
    <property type="evidence" value="ECO:0007669"/>
    <property type="project" value="UniProtKB-UniRule"/>
</dbReference>
<dbReference type="GO" id="GO:0006071">
    <property type="term" value="P:glycerol metabolic process"/>
    <property type="evidence" value="ECO:0007669"/>
    <property type="project" value="UniProtKB-UniRule"/>
</dbReference>
<dbReference type="CDD" id="cd01444">
    <property type="entry name" value="GlpE_ST"/>
    <property type="match status" value="1"/>
</dbReference>
<dbReference type="FunFam" id="3.40.250.10:FF:000007">
    <property type="entry name" value="Thiosulfate sulfurtransferase GlpE"/>
    <property type="match status" value="1"/>
</dbReference>
<dbReference type="Gene3D" id="3.40.250.10">
    <property type="entry name" value="Rhodanese-like domain"/>
    <property type="match status" value="1"/>
</dbReference>
<dbReference type="HAMAP" id="MF_01009">
    <property type="entry name" value="Thiosulf_sulfurtr"/>
    <property type="match status" value="1"/>
</dbReference>
<dbReference type="InterPro" id="IPR050229">
    <property type="entry name" value="GlpE_sulfurtransferase"/>
</dbReference>
<dbReference type="InterPro" id="IPR001763">
    <property type="entry name" value="Rhodanese-like_dom"/>
</dbReference>
<dbReference type="InterPro" id="IPR036873">
    <property type="entry name" value="Rhodanese-like_dom_sf"/>
</dbReference>
<dbReference type="InterPro" id="IPR023695">
    <property type="entry name" value="Thiosulf_sulfurTrfase"/>
</dbReference>
<dbReference type="NCBIfam" id="NF001195">
    <property type="entry name" value="PRK00162.1"/>
    <property type="match status" value="1"/>
</dbReference>
<dbReference type="PANTHER" id="PTHR43031">
    <property type="entry name" value="FAD-DEPENDENT OXIDOREDUCTASE"/>
    <property type="match status" value="1"/>
</dbReference>
<dbReference type="PANTHER" id="PTHR43031:SF6">
    <property type="entry name" value="THIOSULFATE SULFURTRANSFERASE GLPE"/>
    <property type="match status" value="1"/>
</dbReference>
<dbReference type="Pfam" id="PF00581">
    <property type="entry name" value="Rhodanese"/>
    <property type="match status" value="1"/>
</dbReference>
<dbReference type="SMART" id="SM00450">
    <property type="entry name" value="RHOD"/>
    <property type="match status" value="1"/>
</dbReference>
<dbReference type="SUPFAM" id="SSF52821">
    <property type="entry name" value="Rhodanese/Cell cycle control phosphatase"/>
    <property type="match status" value="1"/>
</dbReference>
<dbReference type="PROSITE" id="PS50206">
    <property type="entry name" value="RHODANESE_3"/>
    <property type="match status" value="1"/>
</dbReference>
<proteinExistence type="inferred from homology"/>
<protein>
    <recommendedName>
        <fullName evidence="1">Thiosulfate sulfurtransferase GlpE</fullName>
        <ecNumber evidence="1">2.8.1.1</ecNumber>
    </recommendedName>
</protein>
<name>GLPE_ECO55</name>